<reference key="1">
    <citation type="submission" date="2008-10" db="EMBL/GenBank/DDBJ databases">
        <title>The complete genome sequence of Helicobacter pylori strain P12.</title>
        <authorList>
            <person name="Fischer W."/>
            <person name="Windhager L."/>
            <person name="Karnholz A."/>
            <person name="Zeiller M."/>
            <person name="Zimmer R."/>
            <person name="Haas R."/>
        </authorList>
    </citation>
    <scope>NUCLEOTIDE SEQUENCE [LARGE SCALE GENOMIC DNA]</scope>
    <source>
        <strain>P12</strain>
    </source>
</reference>
<organism>
    <name type="scientific">Helicobacter pylori (strain P12)</name>
    <dbReference type="NCBI Taxonomy" id="570508"/>
    <lineage>
        <taxon>Bacteria</taxon>
        <taxon>Pseudomonadati</taxon>
        <taxon>Campylobacterota</taxon>
        <taxon>Epsilonproteobacteria</taxon>
        <taxon>Campylobacterales</taxon>
        <taxon>Helicobacteraceae</taxon>
        <taxon>Helicobacter</taxon>
    </lineage>
</organism>
<proteinExistence type="inferred from homology"/>
<gene>
    <name evidence="1" type="primary">ispH</name>
    <name type="ordered locus">HPP12_1020</name>
</gene>
<sequence length="274" mass="30917">MEIKMAKDYGFCFGVKRAIQIAEKNQNSLIFGSLIHNAKEINRLEKNFNVKIEEDPKKIPKNKSVIIRTHGIPKQDLEYLKNKGVKITDATCPYVIKPQQIVESMSKEGYQIVLFGDINHPEVKGVISYATNQALVVNSLEELQEKKLQRKVALVSQTTKQTPKLLQIASYLVERCTEVRIFNTICNATSYNQKAALDLSKEVDIMIVVGGKTSSNTKQLLSIAKQHCKDSYLVEDENELELAWFKDKKLCGITAGASTPDWIIENVKQKISTI</sequence>
<feature type="chain" id="PRO_1000098953" description="4-hydroxy-3-methylbut-2-enyl diphosphate reductase">
    <location>
        <begin position="1"/>
        <end position="274"/>
    </location>
</feature>
<feature type="active site" description="Proton donor" evidence="1">
    <location>
        <position position="122"/>
    </location>
</feature>
<feature type="binding site" evidence="1">
    <location>
        <position position="12"/>
    </location>
    <ligand>
        <name>[4Fe-4S] cluster</name>
        <dbReference type="ChEBI" id="CHEBI:49883"/>
    </ligand>
</feature>
<feature type="binding site" evidence="1">
    <location>
        <position position="36"/>
    </location>
    <ligand>
        <name>(2E)-4-hydroxy-3-methylbut-2-enyl diphosphate</name>
        <dbReference type="ChEBI" id="CHEBI:128753"/>
    </ligand>
</feature>
<feature type="binding site" evidence="1">
    <location>
        <position position="36"/>
    </location>
    <ligand>
        <name>dimethylallyl diphosphate</name>
        <dbReference type="ChEBI" id="CHEBI:57623"/>
    </ligand>
</feature>
<feature type="binding site" evidence="1">
    <location>
        <position position="36"/>
    </location>
    <ligand>
        <name>isopentenyl diphosphate</name>
        <dbReference type="ChEBI" id="CHEBI:128769"/>
    </ligand>
</feature>
<feature type="binding site" evidence="1">
    <location>
        <position position="70"/>
    </location>
    <ligand>
        <name>(2E)-4-hydroxy-3-methylbut-2-enyl diphosphate</name>
        <dbReference type="ChEBI" id="CHEBI:128753"/>
    </ligand>
</feature>
<feature type="binding site" evidence="1">
    <location>
        <position position="70"/>
    </location>
    <ligand>
        <name>dimethylallyl diphosphate</name>
        <dbReference type="ChEBI" id="CHEBI:57623"/>
    </ligand>
</feature>
<feature type="binding site" evidence="1">
    <location>
        <position position="70"/>
    </location>
    <ligand>
        <name>isopentenyl diphosphate</name>
        <dbReference type="ChEBI" id="CHEBI:128769"/>
    </ligand>
</feature>
<feature type="binding site" evidence="1">
    <location>
        <position position="92"/>
    </location>
    <ligand>
        <name>[4Fe-4S] cluster</name>
        <dbReference type="ChEBI" id="CHEBI:49883"/>
    </ligand>
</feature>
<feature type="binding site" evidence="1">
    <location>
        <position position="120"/>
    </location>
    <ligand>
        <name>(2E)-4-hydroxy-3-methylbut-2-enyl diphosphate</name>
        <dbReference type="ChEBI" id="CHEBI:128753"/>
    </ligand>
</feature>
<feature type="binding site" evidence="1">
    <location>
        <position position="120"/>
    </location>
    <ligand>
        <name>dimethylallyl diphosphate</name>
        <dbReference type="ChEBI" id="CHEBI:57623"/>
    </ligand>
</feature>
<feature type="binding site" evidence="1">
    <location>
        <position position="120"/>
    </location>
    <ligand>
        <name>isopentenyl diphosphate</name>
        <dbReference type="ChEBI" id="CHEBI:128769"/>
    </ligand>
</feature>
<feature type="binding site" evidence="1">
    <location>
        <position position="158"/>
    </location>
    <ligand>
        <name>(2E)-4-hydroxy-3-methylbut-2-enyl diphosphate</name>
        <dbReference type="ChEBI" id="CHEBI:128753"/>
    </ligand>
</feature>
<feature type="binding site" evidence="1">
    <location>
        <position position="186"/>
    </location>
    <ligand>
        <name>[4Fe-4S] cluster</name>
        <dbReference type="ChEBI" id="CHEBI:49883"/>
    </ligand>
</feature>
<feature type="binding site" evidence="1">
    <location>
        <position position="214"/>
    </location>
    <ligand>
        <name>(2E)-4-hydroxy-3-methylbut-2-enyl diphosphate</name>
        <dbReference type="ChEBI" id="CHEBI:128753"/>
    </ligand>
</feature>
<feature type="binding site" evidence="1">
    <location>
        <position position="214"/>
    </location>
    <ligand>
        <name>dimethylallyl diphosphate</name>
        <dbReference type="ChEBI" id="CHEBI:57623"/>
    </ligand>
</feature>
<feature type="binding site" evidence="1">
    <location>
        <position position="214"/>
    </location>
    <ligand>
        <name>isopentenyl diphosphate</name>
        <dbReference type="ChEBI" id="CHEBI:128769"/>
    </ligand>
</feature>
<feature type="binding site" evidence="1">
    <location>
        <position position="215"/>
    </location>
    <ligand>
        <name>(2E)-4-hydroxy-3-methylbut-2-enyl diphosphate</name>
        <dbReference type="ChEBI" id="CHEBI:128753"/>
    </ligand>
</feature>
<feature type="binding site" evidence="1">
    <location>
        <position position="215"/>
    </location>
    <ligand>
        <name>dimethylallyl diphosphate</name>
        <dbReference type="ChEBI" id="CHEBI:57623"/>
    </ligand>
</feature>
<feature type="binding site" evidence="1">
    <location>
        <position position="215"/>
    </location>
    <ligand>
        <name>isopentenyl diphosphate</name>
        <dbReference type="ChEBI" id="CHEBI:128769"/>
    </ligand>
</feature>
<feature type="binding site" evidence="1">
    <location>
        <position position="216"/>
    </location>
    <ligand>
        <name>(2E)-4-hydroxy-3-methylbut-2-enyl diphosphate</name>
        <dbReference type="ChEBI" id="CHEBI:128753"/>
    </ligand>
</feature>
<feature type="binding site" evidence="1">
    <location>
        <position position="216"/>
    </location>
    <ligand>
        <name>dimethylallyl diphosphate</name>
        <dbReference type="ChEBI" id="CHEBI:57623"/>
    </ligand>
</feature>
<feature type="binding site" evidence="1">
    <location>
        <position position="216"/>
    </location>
    <ligand>
        <name>isopentenyl diphosphate</name>
        <dbReference type="ChEBI" id="CHEBI:128769"/>
    </ligand>
</feature>
<feature type="binding site" evidence="1">
    <location>
        <position position="258"/>
    </location>
    <ligand>
        <name>(2E)-4-hydroxy-3-methylbut-2-enyl diphosphate</name>
        <dbReference type="ChEBI" id="CHEBI:128753"/>
    </ligand>
</feature>
<feature type="binding site" evidence="1">
    <location>
        <position position="258"/>
    </location>
    <ligand>
        <name>dimethylallyl diphosphate</name>
        <dbReference type="ChEBI" id="CHEBI:57623"/>
    </ligand>
</feature>
<feature type="binding site" evidence="1">
    <location>
        <position position="258"/>
    </location>
    <ligand>
        <name>isopentenyl diphosphate</name>
        <dbReference type="ChEBI" id="CHEBI:128769"/>
    </ligand>
</feature>
<evidence type="ECO:0000255" key="1">
    <source>
        <dbReference type="HAMAP-Rule" id="MF_00191"/>
    </source>
</evidence>
<comment type="function">
    <text evidence="1">Catalyzes the conversion of 1-hydroxy-2-methyl-2-(E)-butenyl 4-diphosphate (HMBPP) into a mixture of isopentenyl diphosphate (IPP) and dimethylallyl diphosphate (DMAPP). Acts in the terminal step of the DOXP/MEP pathway for isoprenoid precursor biosynthesis.</text>
</comment>
<comment type="catalytic activity">
    <reaction evidence="1">
        <text>isopentenyl diphosphate + 2 oxidized [2Fe-2S]-[ferredoxin] + H2O = (2E)-4-hydroxy-3-methylbut-2-enyl diphosphate + 2 reduced [2Fe-2S]-[ferredoxin] + 2 H(+)</text>
        <dbReference type="Rhea" id="RHEA:24488"/>
        <dbReference type="Rhea" id="RHEA-COMP:10000"/>
        <dbReference type="Rhea" id="RHEA-COMP:10001"/>
        <dbReference type="ChEBI" id="CHEBI:15377"/>
        <dbReference type="ChEBI" id="CHEBI:15378"/>
        <dbReference type="ChEBI" id="CHEBI:33737"/>
        <dbReference type="ChEBI" id="CHEBI:33738"/>
        <dbReference type="ChEBI" id="CHEBI:128753"/>
        <dbReference type="ChEBI" id="CHEBI:128769"/>
        <dbReference type="EC" id="1.17.7.4"/>
    </reaction>
</comment>
<comment type="catalytic activity">
    <reaction evidence="1">
        <text>dimethylallyl diphosphate + 2 oxidized [2Fe-2S]-[ferredoxin] + H2O = (2E)-4-hydroxy-3-methylbut-2-enyl diphosphate + 2 reduced [2Fe-2S]-[ferredoxin] + 2 H(+)</text>
        <dbReference type="Rhea" id="RHEA:24825"/>
        <dbReference type="Rhea" id="RHEA-COMP:10000"/>
        <dbReference type="Rhea" id="RHEA-COMP:10001"/>
        <dbReference type="ChEBI" id="CHEBI:15377"/>
        <dbReference type="ChEBI" id="CHEBI:15378"/>
        <dbReference type="ChEBI" id="CHEBI:33737"/>
        <dbReference type="ChEBI" id="CHEBI:33738"/>
        <dbReference type="ChEBI" id="CHEBI:57623"/>
        <dbReference type="ChEBI" id="CHEBI:128753"/>
        <dbReference type="EC" id="1.17.7.4"/>
    </reaction>
</comment>
<comment type="cofactor">
    <cofactor evidence="1">
        <name>[4Fe-4S] cluster</name>
        <dbReference type="ChEBI" id="CHEBI:49883"/>
    </cofactor>
    <text evidence="1">Binds 1 [4Fe-4S] cluster per subunit.</text>
</comment>
<comment type="pathway">
    <text evidence="1">Isoprenoid biosynthesis; dimethylallyl diphosphate biosynthesis; dimethylallyl diphosphate from (2E)-4-hydroxy-3-methylbutenyl diphosphate: step 1/1.</text>
</comment>
<comment type="pathway">
    <text evidence="1">Isoprenoid biosynthesis; isopentenyl diphosphate biosynthesis via DXP pathway; isopentenyl diphosphate from 1-deoxy-D-xylulose 5-phosphate: step 6/6.</text>
</comment>
<comment type="similarity">
    <text evidence="1">Belongs to the IspH family.</text>
</comment>
<protein>
    <recommendedName>
        <fullName evidence="1">4-hydroxy-3-methylbut-2-enyl diphosphate reductase</fullName>
        <shortName evidence="1">HMBPP reductase</shortName>
        <ecNumber evidence="1">1.17.7.4</ecNumber>
    </recommendedName>
</protein>
<keyword id="KW-0004">4Fe-4S</keyword>
<keyword id="KW-0408">Iron</keyword>
<keyword id="KW-0411">Iron-sulfur</keyword>
<keyword id="KW-0414">Isoprene biosynthesis</keyword>
<keyword id="KW-0479">Metal-binding</keyword>
<keyword id="KW-0560">Oxidoreductase</keyword>
<accession>B6JMP4</accession>
<dbReference type="EC" id="1.17.7.4" evidence="1"/>
<dbReference type="EMBL" id="CP001217">
    <property type="protein sequence ID" value="ACJ08172.1"/>
    <property type="molecule type" value="Genomic_DNA"/>
</dbReference>
<dbReference type="SMR" id="B6JMP4"/>
<dbReference type="KEGG" id="hpp:HPP12_1020"/>
<dbReference type="HOGENOM" id="CLU_027486_0_1_7"/>
<dbReference type="UniPathway" id="UPA00056">
    <property type="reaction ID" value="UER00097"/>
</dbReference>
<dbReference type="UniPathway" id="UPA00059">
    <property type="reaction ID" value="UER00105"/>
</dbReference>
<dbReference type="Proteomes" id="UP000008198">
    <property type="component" value="Chromosome"/>
</dbReference>
<dbReference type="GO" id="GO:0051539">
    <property type="term" value="F:4 iron, 4 sulfur cluster binding"/>
    <property type="evidence" value="ECO:0007669"/>
    <property type="project" value="UniProtKB-UniRule"/>
</dbReference>
<dbReference type="GO" id="GO:0051745">
    <property type="term" value="F:4-hydroxy-3-methylbut-2-enyl diphosphate reductase activity"/>
    <property type="evidence" value="ECO:0007669"/>
    <property type="project" value="UniProtKB-UniRule"/>
</dbReference>
<dbReference type="GO" id="GO:0046872">
    <property type="term" value="F:metal ion binding"/>
    <property type="evidence" value="ECO:0007669"/>
    <property type="project" value="UniProtKB-KW"/>
</dbReference>
<dbReference type="GO" id="GO:0050992">
    <property type="term" value="P:dimethylallyl diphosphate biosynthetic process"/>
    <property type="evidence" value="ECO:0007669"/>
    <property type="project" value="UniProtKB-UniRule"/>
</dbReference>
<dbReference type="GO" id="GO:0019288">
    <property type="term" value="P:isopentenyl diphosphate biosynthetic process, methylerythritol 4-phosphate pathway"/>
    <property type="evidence" value="ECO:0007669"/>
    <property type="project" value="UniProtKB-UniRule"/>
</dbReference>
<dbReference type="GO" id="GO:0016114">
    <property type="term" value="P:terpenoid biosynthetic process"/>
    <property type="evidence" value="ECO:0007669"/>
    <property type="project" value="UniProtKB-UniRule"/>
</dbReference>
<dbReference type="CDD" id="cd13944">
    <property type="entry name" value="lytB_ispH"/>
    <property type="match status" value="1"/>
</dbReference>
<dbReference type="Gene3D" id="3.40.50.11270">
    <property type="match status" value="1"/>
</dbReference>
<dbReference type="Gene3D" id="3.40.1010.20">
    <property type="entry name" value="4-hydroxy-3-methylbut-2-enyl diphosphate reductase, catalytic domain"/>
    <property type="match status" value="2"/>
</dbReference>
<dbReference type="HAMAP" id="MF_00191">
    <property type="entry name" value="IspH"/>
    <property type="match status" value="1"/>
</dbReference>
<dbReference type="InterPro" id="IPR003451">
    <property type="entry name" value="LytB/IspH"/>
</dbReference>
<dbReference type="NCBIfam" id="TIGR00216">
    <property type="entry name" value="ispH_lytB"/>
    <property type="match status" value="1"/>
</dbReference>
<dbReference type="NCBIfam" id="NF002187">
    <property type="entry name" value="PRK01045.1-1"/>
    <property type="match status" value="1"/>
</dbReference>
<dbReference type="PANTHER" id="PTHR30426">
    <property type="entry name" value="4-HYDROXY-3-METHYLBUT-2-ENYL DIPHOSPHATE REDUCTASE"/>
    <property type="match status" value="1"/>
</dbReference>
<dbReference type="PANTHER" id="PTHR30426:SF0">
    <property type="entry name" value="4-HYDROXY-3-METHYLBUT-2-ENYL DIPHOSPHATE REDUCTASE"/>
    <property type="match status" value="1"/>
</dbReference>
<dbReference type="Pfam" id="PF02401">
    <property type="entry name" value="LYTB"/>
    <property type="match status" value="1"/>
</dbReference>
<name>ISPH_HELP2</name>